<sequence>MSKLLYVRDHEGFACLTVETHRNRWFAAHIVLTKDCGCLKLLNERDLEFYKFLFTFLAMAEKLVNFNIDELVTSFESHDIDHYYTEQKAMENVHGETYANILNMLFDGDRAAMNAYAEAIMADEALQAKISWLRDKVAAAVTLPEKILVFLLIEGIFFISSFYSIALLRVRGLMPGICLANNYISRDELLHTRAASLLYNSMTAKADRPRATWIQELFRTAVEVETAFIEARGEGVTLVDVRAIKQFLEATADRILGDIGQAPLYGTPPPKDCPLTYMTSIKQTNFFEQESSDYTMLVVDDL</sequence>
<protein>
    <recommendedName>
        <fullName evidence="1">Ribonucleoside-diphosphate reductase small subunit</fullName>
        <ecNumber evidence="1">1.17.4.1</ecNumber>
    </recommendedName>
    <alternativeName>
        <fullName evidence="1">Ribonucleotide reductase small subunit</fullName>
    </alternativeName>
</protein>
<keyword id="KW-0235">DNA replication</keyword>
<keyword id="KW-1043">Host membrane</keyword>
<keyword id="KW-0408">Iron</keyword>
<keyword id="KW-0472">Membrane</keyword>
<keyword id="KW-0479">Metal-binding</keyword>
<keyword id="KW-0560">Oxidoreductase</keyword>
<keyword id="KW-1185">Reference proteome</keyword>
<keyword id="KW-0812">Transmembrane</keyword>
<keyword id="KW-1133">Transmembrane helix</keyword>
<keyword id="KW-1251">Viral latency</keyword>
<keyword id="KW-1272">Viral reactivation from latency</keyword>
<feature type="chain" id="PRO_0000190502" description="Ribonucleoside-diphosphate reductase small subunit">
    <location>
        <begin position="1"/>
        <end position="302"/>
    </location>
</feature>
<feature type="transmembrane region" description="Helical" evidence="1">
    <location>
        <begin position="147"/>
        <end position="167"/>
    </location>
</feature>
<feature type="active site" evidence="1">
    <location>
        <position position="98"/>
    </location>
</feature>
<feature type="binding site" evidence="1">
    <location>
        <position position="61"/>
    </location>
    <ligand>
        <name>Fe cation</name>
        <dbReference type="ChEBI" id="CHEBI:24875"/>
        <label>1</label>
    </ligand>
</feature>
<feature type="binding site" evidence="1">
    <location>
        <position position="91"/>
    </location>
    <ligand>
        <name>Fe cation</name>
        <dbReference type="ChEBI" id="CHEBI:24875"/>
        <label>1</label>
    </ligand>
</feature>
<feature type="binding site" evidence="1">
    <location>
        <position position="91"/>
    </location>
    <ligand>
        <name>Fe cation</name>
        <dbReference type="ChEBI" id="CHEBI:24875"/>
        <label>2</label>
    </ligand>
</feature>
<feature type="binding site" evidence="1">
    <location>
        <position position="94"/>
    </location>
    <ligand>
        <name>Fe cation</name>
        <dbReference type="ChEBI" id="CHEBI:24875"/>
        <label>1</label>
    </ligand>
</feature>
<feature type="binding site" evidence="1">
    <location>
        <position position="154"/>
    </location>
    <ligand>
        <name>Fe cation</name>
        <dbReference type="ChEBI" id="CHEBI:24875"/>
        <label>2</label>
    </ligand>
</feature>
<feature type="binding site" evidence="1">
    <location>
        <position position="188"/>
    </location>
    <ligand>
        <name>Fe cation</name>
        <dbReference type="ChEBI" id="CHEBI:24875"/>
        <label>2</label>
    </ligand>
</feature>
<feature type="binding site" evidence="1">
    <location>
        <position position="191"/>
    </location>
    <ligand>
        <name>Fe cation</name>
        <dbReference type="ChEBI" id="CHEBI:24875"/>
        <label>2</label>
    </ligand>
</feature>
<feature type="sequence conflict" description="In Ref. 5; no nucleotide entry." evidence="2" ref="5">
    <original>A</original>
    <variation>T</variation>
    <location>
        <position position="122"/>
    </location>
</feature>
<proteinExistence type="evidence at protein level"/>
<name>RIR2_EBVB9</name>
<organismHost>
    <name type="scientific">Homo sapiens</name>
    <name type="common">Human</name>
    <dbReference type="NCBI Taxonomy" id="9606"/>
</organismHost>
<gene>
    <name evidence="1" type="primary">RIR2</name>
    <name type="ORF">BaRF1</name>
</gene>
<dbReference type="EC" id="1.17.4.1" evidence="1"/>
<dbReference type="EMBL" id="V01555">
    <property type="protein sequence ID" value="CAA24843.1"/>
    <property type="molecule type" value="Genomic_DNA"/>
</dbReference>
<dbReference type="EMBL" id="AJ507799">
    <property type="protein sequence ID" value="CAD53406.1"/>
    <property type="molecule type" value="Genomic_DNA"/>
</dbReference>
<dbReference type="PIR" id="A00530">
    <property type="entry name" value="WMBE12"/>
</dbReference>
<dbReference type="RefSeq" id="YP_401656.1">
    <property type="nucleotide sequence ID" value="NC_007605.1"/>
</dbReference>
<dbReference type="SMR" id="P0CAP6"/>
<dbReference type="IntAct" id="P0CAP6">
    <property type="interactions" value="6"/>
</dbReference>
<dbReference type="MINT" id="P0CAP6"/>
<dbReference type="DNASU" id="3783683"/>
<dbReference type="GeneID" id="3783683"/>
<dbReference type="KEGG" id="vg:3783683"/>
<dbReference type="Proteomes" id="UP000153037">
    <property type="component" value="Segment"/>
</dbReference>
<dbReference type="GO" id="GO:0033644">
    <property type="term" value="C:host cell membrane"/>
    <property type="evidence" value="ECO:0007669"/>
    <property type="project" value="UniProtKB-SubCell"/>
</dbReference>
<dbReference type="GO" id="GO:0016020">
    <property type="term" value="C:membrane"/>
    <property type="evidence" value="ECO:0007669"/>
    <property type="project" value="UniProtKB-KW"/>
</dbReference>
<dbReference type="GO" id="GO:0046872">
    <property type="term" value="F:metal ion binding"/>
    <property type="evidence" value="ECO:0007669"/>
    <property type="project" value="UniProtKB-KW"/>
</dbReference>
<dbReference type="GO" id="GO:0004748">
    <property type="term" value="F:ribonucleoside-diphosphate reductase activity, thioredoxin disulfide as acceptor"/>
    <property type="evidence" value="ECO:0007669"/>
    <property type="project" value="UniProtKB-EC"/>
</dbReference>
<dbReference type="GO" id="GO:0009263">
    <property type="term" value="P:deoxyribonucleotide biosynthetic process"/>
    <property type="evidence" value="ECO:0007669"/>
    <property type="project" value="InterPro"/>
</dbReference>
<dbReference type="GO" id="GO:0006260">
    <property type="term" value="P:DNA replication"/>
    <property type="evidence" value="ECO:0007669"/>
    <property type="project" value="UniProtKB-KW"/>
</dbReference>
<dbReference type="GO" id="GO:0019046">
    <property type="term" value="P:release from viral latency"/>
    <property type="evidence" value="ECO:0007669"/>
    <property type="project" value="UniProtKB-KW"/>
</dbReference>
<dbReference type="CDD" id="cd01049">
    <property type="entry name" value="RNRR2"/>
    <property type="match status" value="1"/>
</dbReference>
<dbReference type="Gene3D" id="1.10.620.20">
    <property type="entry name" value="Ribonucleotide Reductase, subunit A"/>
    <property type="match status" value="1"/>
</dbReference>
<dbReference type="HAMAP" id="MF_04028">
    <property type="entry name" value="HSV_RIR2"/>
    <property type="match status" value="1"/>
</dbReference>
<dbReference type="InterPro" id="IPR009078">
    <property type="entry name" value="Ferritin-like_SF"/>
</dbReference>
<dbReference type="InterPro" id="IPR034715">
    <property type="entry name" value="HSV_RIR2"/>
</dbReference>
<dbReference type="InterPro" id="IPR012348">
    <property type="entry name" value="RNR-like"/>
</dbReference>
<dbReference type="InterPro" id="IPR033909">
    <property type="entry name" value="RNR_small"/>
</dbReference>
<dbReference type="InterPro" id="IPR030475">
    <property type="entry name" value="RNR_small_AS"/>
</dbReference>
<dbReference type="InterPro" id="IPR000358">
    <property type="entry name" value="RNR_small_fam"/>
</dbReference>
<dbReference type="PANTHER" id="PTHR23409">
    <property type="entry name" value="RIBONUCLEOSIDE-DIPHOSPHATE REDUCTASE SMALL CHAIN"/>
    <property type="match status" value="1"/>
</dbReference>
<dbReference type="PANTHER" id="PTHR23409:SF18">
    <property type="entry name" value="RIBONUCLEOSIDE-DIPHOSPHATE REDUCTASE SUBUNIT M2"/>
    <property type="match status" value="1"/>
</dbReference>
<dbReference type="Pfam" id="PF00268">
    <property type="entry name" value="Ribonuc_red_sm"/>
    <property type="match status" value="1"/>
</dbReference>
<dbReference type="SUPFAM" id="SSF47240">
    <property type="entry name" value="Ferritin-like"/>
    <property type="match status" value="1"/>
</dbReference>
<dbReference type="PROSITE" id="PS00368">
    <property type="entry name" value="RIBORED_SMALL"/>
    <property type="match status" value="1"/>
</dbReference>
<evidence type="ECO:0000255" key="1">
    <source>
        <dbReference type="HAMAP-Rule" id="MF_04028"/>
    </source>
</evidence>
<evidence type="ECO:0000305" key="2"/>
<accession>P0CAP6</accession>
<accession>P03175</accession>
<accession>Q777G0</accession>
<reference key="1">
    <citation type="journal article" date="1984" name="Nature">
        <title>DNA sequence and expression of the B95-8 Epstein-Barr virus genome.</title>
        <authorList>
            <person name="Baer R."/>
            <person name="Bankier A.T."/>
            <person name="Biggin M.D."/>
            <person name="Deininger P.L."/>
            <person name="Farrell P.J."/>
            <person name="Gibson T.J."/>
            <person name="Hatfull G."/>
            <person name="Hudson G.S."/>
            <person name="Satchwell S.C."/>
            <person name="Seguin C."/>
            <person name="Tuffnell P.S."/>
            <person name="Barrell B.G."/>
        </authorList>
    </citation>
    <scope>NUCLEOTIDE SEQUENCE [LARGE SCALE GENOMIC DNA]</scope>
</reference>
<reference key="2">
    <citation type="journal article" date="2003" name="Virology">
        <title>Updated Epstein-Barr virus (EBV) DNA sequence and analysis of a promoter for the BART (CST, BARF0) RNAs of EBV.</title>
        <authorList>
            <person name="de Jesus O."/>
            <person name="Smith P.R."/>
            <person name="Spender L.C."/>
            <person name="Elgueta Karstegl C."/>
            <person name="Niller H.H."/>
            <person name="Huang D."/>
            <person name="Farrell P.J."/>
        </authorList>
    </citation>
    <scope>GENOME REANNOTATION</scope>
</reference>
<reference key="3">
    <citation type="journal article" date="1984" name="Nucleic Acids Res.">
        <title>Homology between two EBV early genes and HSV ribonucleotide reductase and 38K genes.</title>
        <authorList>
            <person name="Gibson T.J."/>
            <person name="Stockwell P."/>
            <person name="Ginsburg M."/>
            <person name="Barrell B.G."/>
        </authorList>
    </citation>
    <scope>IDENTIFICATION OF PROTEIN</scope>
</reference>
<reference key="4">
    <citation type="journal article" date="2009" name="Trends Biochem. Sci.">
        <title>Tinkering with a viral ribonucleotide reductase.</title>
        <authorList>
            <person name="Lembo D."/>
            <person name="Brune W."/>
        </authorList>
    </citation>
    <scope>REVIEW</scope>
</reference>
<reference key="5">
    <citation type="journal article" date="2012" name="ACS Chem. Biol.">
        <title>Mechanistic basis for Epstein-Barr Virus ribonucleotide-reductase small-subunit function.</title>
        <authorList>
            <person name="Schmitzberger F."/>
            <person name="Gurmu D."/>
            <person name="Dahlroth S.L."/>
            <person name="Nordlund P."/>
        </authorList>
    </citation>
    <scope>X-RAY CRYSTALLOGRAPHY (1.6 ANGSTROMS)</scope>
    <scope>RETRACTED PAPER</scope>
</reference>
<reference key="6">
    <citation type="journal article" date="2012" name="ACS Chem. Biol.">
        <authorList>
            <person name="Schmitzberger F."/>
            <person name="Gurmu D."/>
            <person name="Dahlroth S.L."/>
            <person name="Nordlund P."/>
        </authorList>
    </citation>
    <scope>ERRATUM OF PUBMED:22824004</scope>
    <scope>RETRACTION NOTICE OF PUBMED:22824004</scope>
</reference>
<comment type="function">
    <text evidence="1">Ribonucleoside-diphosphate reductase holoenzyme provides the precursors necessary for viral DNA synthesis. Allows virus growth in non-dividing cells, as well as reactivation from latency in infected hosts. Catalyzes the biosynthesis of deoxyribonucleotides from the corresponding ribonucleotides.</text>
</comment>
<comment type="catalytic activity">
    <reaction evidence="1">
        <text>a 2'-deoxyribonucleoside 5'-diphosphate + [thioredoxin]-disulfide + H2O = a ribonucleoside 5'-diphosphate + [thioredoxin]-dithiol</text>
        <dbReference type="Rhea" id="RHEA:23252"/>
        <dbReference type="Rhea" id="RHEA-COMP:10698"/>
        <dbReference type="Rhea" id="RHEA-COMP:10700"/>
        <dbReference type="ChEBI" id="CHEBI:15377"/>
        <dbReference type="ChEBI" id="CHEBI:29950"/>
        <dbReference type="ChEBI" id="CHEBI:50058"/>
        <dbReference type="ChEBI" id="CHEBI:57930"/>
        <dbReference type="ChEBI" id="CHEBI:73316"/>
        <dbReference type="EC" id="1.17.4.1"/>
    </reaction>
</comment>
<comment type="cofactor">
    <cofactor evidence="1">
        <name>Fe cation</name>
        <dbReference type="ChEBI" id="CHEBI:24875"/>
    </cofactor>
</comment>
<comment type="subunit">
    <text evidence="1">Heterotetramer composed of a homodimer of the large subunit (R1) and a homodimer of the small subunit (R2). Larger multisubunit protein complex are also active, composed of (R1)n(R2)n.</text>
</comment>
<comment type="subcellular location">
    <subcellularLocation>
        <location evidence="1">Host membrane</location>
        <topology evidence="1">Single-pass membrane protein</topology>
    </subcellularLocation>
</comment>
<comment type="similarity">
    <text evidence="1">Belongs to the ribonucleoside diphosphate reductase small chain family.</text>
</comment>
<organism>
    <name type="scientific">Epstein-Barr virus (strain B95-8)</name>
    <name type="common">HHV-4</name>
    <name type="synonym">Human herpesvirus 4</name>
    <dbReference type="NCBI Taxonomy" id="10377"/>
    <lineage>
        <taxon>Viruses</taxon>
        <taxon>Duplodnaviria</taxon>
        <taxon>Heunggongvirae</taxon>
        <taxon>Peploviricota</taxon>
        <taxon>Herviviricetes</taxon>
        <taxon>Herpesvirales</taxon>
        <taxon>Orthoherpesviridae</taxon>
        <taxon>Gammaherpesvirinae</taxon>
        <taxon>Lymphocryptovirus</taxon>
        <taxon>Lymphocryptovirus humangamma4</taxon>
        <taxon>Epstein-Barr virus (strain GD1)</taxon>
    </lineage>
</organism>